<dbReference type="EC" id="3.4.11.1" evidence="4 5 6"/>
<dbReference type="EC" id="3.4.13.-" evidence="5"/>
<dbReference type="EMBL" id="AAKM01000004">
    <property type="protein sequence ID" value="EDL46203.1"/>
    <property type="molecule type" value="Genomic_DNA"/>
</dbReference>
<dbReference type="RefSeq" id="XP_001615930.1">
    <property type="nucleotide sequence ID" value="XM_001615880.1"/>
</dbReference>
<dbReference type="PDB" id="6WVV">
    <property type="method" value="X-ray"/>
    <property type="resolution" value="2.33 A"/>
    <property type="chains" value="A/B/C/D/E/F/G/H/I/J/K/L=73-621"/>
</dbReference>
<dbReference type="PDB" id="7K5K">
    <property type="method" value="EM"/>
    <property type="resolution" value="2.66 A"/>
    <property type="chains" value="A/B/C/D/E/F=73-621"/>
</dbReference>
<dbReference type="PDBsum" id="6WVV"/>
<dbReference type="PDBsum" id="7K5K"/>
<dbReference type="SMR" id="A5K3U9"/>
<dbReference type="FunCoup" id="A5K3U9">
    <property type="interactions" value="158"/>
</dbReference>
<dbReference type="STRING" id="126793.A5K3U9"/>
<dbReference type="MEROPS" id="M17.008"/>
<dbReference type="EnsemblProtists" id="EDL46203">
    <property type="protein sequence ID" value="EDL46203"/>
    <property type="gene ID" value="PVX_118180"/>
</dbReference>
<dbReference type="GeneID" id="5475228"/>
<dbReference type="KEGG" id="pvx:PVX_118180"/>
<dbReference type="VEuPathDB" id="PlasmoDB:PVX_118180"/>
<dbReference type="InParanoid" id="A5K3U9"/>
<dbReference type="OMA" id="LFYEYVT"/>
<dbReference type="PhylomeDB" id="A5K3U9"/>
<dbReference type="BRENDA" id="3.4.11.1">
    <property type="organism ID" value="4894"/>
</dbReference>
<dbReference type="Proteomes" id="UP000008333">
    <property type="component" value="Chromosome 12"/>
</dbReference>
<dbReference type="GO" id="GO:0005737">
    <property type="term" value="C:cytoplasm"/>
    <property type="evidence" value="ECO:0007669"/>
    <property type="project" value="UniProtKB-SubCell"/>
</dbReference>
<dbReference type="GO" id="GO:0030145">
    <property type="term" value="F:manganese ion binding"/>
    <property type="evidence" value="ECO:0007669"/>
    <property type="project" value="InterPro"/>
</dbReference>
<dbReference type="GO" id="GO:0070006">
    <property type="term" value="F:metalloaminopeptidase activity"/>
    <property type="evidence" value="ECO:0000314"/>
    <property type="project" value="UniProtKB"/>
</dbReference>
<dbReference type="GO" id="GO:0070573">
    <property type="term" value="F:metallodipeptidase activity"/>
    <property type="evidence" value="ECO:0000314"/>
    <property type="project" value="UniProtKB"/>
</dbReference>
<dbReference type="GO" id="GO:0008270">
    <property type="term" value="F:zinc ion binding"/>
    <property type="evidence" value="ECO:0000314"/>
    <property type="project" value="UniProtKB"/>
</dbReference>
<dbReference type="GO" id="GO:0043171">
    <property type="term" value="P:peptide catabolic process"/>
    <property type="evidence" value="ECO:0000314"/>
    <property type="project" value="UniProtKB"/>
</dbReference>
<dbReference type="GO" id="GO:0006508">
    <property type="term" value="P:proteolysis"/>
    <property type="evidence" value="ECO:0000314"/>
    <property type="project" value="UniProtKB"/>
</dbReference>
<dbReference type="CDD" id="cd00433">
    <property type="entry name" value="Peptidase_M17"/>
    <property type="match status" value="1"/>
</dbReference>
<dbReference type="FunFam" id="3.40.630.10:FF:000033">
    <property type="entry name" value="M17 leucyl aminopeptidase"/>
    <property type="match status" value="1"/>
</dbReference>
<dbReference type="Gene3D" id="3.40.220.10">
    <property type="entry name" value="Leucine Aminopeptidase, subunit E, domain 1"/>
    <property type="match status" value="1"/>
</dbReference>
<dbReference type="Gene3D" id="3.40.630.10">
    <property type="entry name" value="Zn peptidases"/>
    <property type="match status" value="1"/>
</dbReference>
<dbReference type="HAMAP" id="MF_00181">
    <property type="entry name" value="Cytosol_peptidase_M17"/>
    <property type="match status" value="1"/>
</dbReference>
<dbReference type="InterPro" id="IPR011356">
    <property type="entry name" value="Leucine_aapep/pepB"/>
</dbReference>
<dbReference type="InterPro" id="IPR043472">
    <property type="entry name" value="Macro_dom-like"/>
</dbReference>
<dbReference type="InterPro" id="IPR000819">
    <property type="entry name" value="Peptidase_M17_C"/>
</dbReference>
<dbReference type="InterPro" id="IPR023042">
    <property type="entry name" value="Peptidase_M17_leu_NH2_pept"/>
</dbReference>
<dbReference type="PANTHER" id="PTHR11963:SF23">
    <property type="entry name" value="CYTOSOL AMINOPEPTIDASE"/>
    <property type="match status" value="1"/>
</dbReference>
<dbReference type="PANTHER" id="PTHR11963">
    <property type="entry name" value="LEUCINE AMINOPEPTIDASE-RELATED"/>
    <property type="match status" value="1"/>
</dbReference>
<dbReference type="Pfam" id="PF00883">
    <property type="entry name" value="Peptidase_M17"/>
    <property type="match status" value="1"/>
</dbReference>
<dbReference type="PRINTS" id="PR00481">
    <property type="entry name" value="LAMNOPPTDASE"/>
</dbReference>
<dbReference type="SUPFAM" id="SSF52949">
    <property type="entry name" value="Macro domain-like"/>
    <property type="match status" value="1"/>
</dbReference>
<dbReference type="SUPFAM" id="SSF53187">
    <property type="entry name" value="Zn-dependent exopeptidases"/>
    <property type="match status" value="1"/>
</dbReference>
<dbReference type="PROSITE" id="PS00631">
    <property type="entry name" value="CYTOSOL_AP"/>
    <property type="match status" value="1"/>
</dbReference>
<reference evidence="12" key="1">
    <citation type="journal article" date="2008" name="Nature">
        <title>Comparative genomics of the neglected human malaria parasite Plasmodium vivax.</title>
        <authorList>
            <person name="Carlton J.M."/>
            <person name="Adams J.H."/>
            <person name="Silva J.C."/>
            <person name="Bidwell S.L."/>
            <person name="Lorenzi H."/>
            <person name="Caler E."/>
            <person name="Crabtree J."/>
            <person name="Angiuoli S.V."/>
            <person name="Merino E.F."/>
            <person name="Amedeo P."/>
            <person name="Cheng Q."/>
            <person name="Coulson R.M.R."/>
            <person name="Crabb B.S."/>
            <person name="del Portillo H.A."/>
            <person name="Essien K."/>
            <person name="Feldblyum T.V."/>
            <person name="Fernandez-Becerra C."/>
            <person name="Gilson P.R."/>
            <person name="Gueye A.H."/>
            <person name="Guo X."/>
            <person name="Kang'a S."/>
            <person name="Kooij T.W.A."/>
            <person name="Korsinczky M."/>
            <person name="Meyer E.V.-S."/>
            <person name="Nene V."/>
            <person name="Paulsen I."/>
            <person name="White O."/>
            <person name="Ralph S.A."/>
            <person name="Ren Q."/>
            <person name="Sargeant T.J."/>
            <person name="Salzberg S.L."/>
            <person name="Stoeckert C.J."/>
            <person name="Sullivan S.A."/>
            <person name="Yamamoto M.M."/>
            <person name="Hoffman S.L."/>
            <person name="Wortman J.R."/>
            <person name="Gardner M.J."/>
            <person name="Galinski M.R."/>
            <person name="Barnwell J.W."/>
            <person name="Fraser-Liggett C.M."/>
        </authorList>
    </citation>
    <scope>NUCLEOTIDE SEQUENCE [LARGE SCALE GENOMIC DNA]</scope>
    <source>
        <strain evidence="12">Salvador I</strain>
    </source>
</reference>
<reference evidence="9" key="2">
    <citation type="journal article" date="2010" name="Mol. Biochem. Parasitol.">
        <title>M17 leucine aminopeptidase of the human malaria parasite Plasmodium vivax.</title>
        <authorList>
            <person name="Lee J.Y."/>
            <person name="Song S.M."/>
            <person name="Seok J.W."/>
            <person name="Jha B.K."/>
            <person name="Han E.T."/>
            <person name="Song H.O."/>
            <person name="Yu H.S."/>
            <person name="Hong Y."/>
            <person name="Kong H.H."/>
            <person name="Chung D.I."/>
        </authorList>
    </citation>
    <scope>FUNCTION</scope>
    <scope>CATALYTIC ACTIVITY</scope>
    <scope>COFACTOR</scope>
    <scope>ACTIVITY REGULATION</scope>
    <scope>BIOPHYSICOCHEMICAL PROPERTIES</scope>
    <scope>SUBCELLULAR LOCATION</scope>
    <scope>DEVELOPMENTAL STAGE</scope>
    <scope>PROTEOLYTIC CLEAVAGE</scope>
</reference>
<reference evidence="9" key="3">
    <citation type="journal article" date="2021" name="Biochem. J.">
        <title>Mapping the substrate specificity of the Plasmodium M1 and M17 aminopeptidases.</title>
        <authorList>
            <person name="Malcolm T.R."/>
            <person name="Swiderska K.W."/>
            <person name="Hayes B.K."/>
            <person name="Webb C.T."/>
            <person name="Drag M."/>
            <person name="Drinkwater N."/>
            <person name="McGowan S."/>
        </authorList>
    </citation>
    <scope>FUNCTION</scope>
    <scope>CATALYTIC ACTIVITY</scope>
    <scope>ACTIVITY REGULATION</scope>
    <scope>BIOPHYSICOCHEMICAL PROPERTIES</scope>
</reference>
<reference evidence="13 14" key="4">
    <citation type="journal article" date="2021" name="J. Biol. Chem.">
        <title>Active site metals mediate an oligomeric equilibrium in Plasmodium M17 aminopeptidases.</title>
        <authorList>
            <person name="Malcolm T.R."/>
            <person name="Belousoff M.J."/>
            <person name="Venugopal H."/>
            <person name="Borg N.A."/>
            <person name="Drinkwater N."/>
            <person name="Atkinson S.C."/>
            <person name="McGowan S."/>
        </authorList>
    </citation>
    <scope>X-RAY CRYSTALLOGRAPHY (2.33 ANGSTROMS) OF 73-621 OF WILD TYPE AND MUTANT 125-ALA--151-ALA DEL IN COMPLEX WITH ZINC AND MANGANESE</scope>
    <scope>FUNCTION</scope>
    <scope>CATALYTIC ACTIVITY</scope>
    <scope>COFACTOR</scope>
    <scope>BIOPHYSICOCHEMICAL PROPERTIES</scope>
    <scope>SUBUNIT</scope>
    <scope>MUTAGENESIS OF 125-ALA--ALA-151; ASP-395 AND GLU-477</scope>
</reference>
<accession>A5K3U9</accession>
<organism evidence="12">
    <name type="scientific">Plasmodium vivax (strain Salvador I)</name>
    <dbReference type="NCBI Taxonomy" id="126793"/>
    <lineage>
        <taxon>Eukaryota</taxon>
        <taxon>Sar</taxon>
        <taxon>Alveolata</taxon>
        <taxon>Apicomplexa</taxon>
        <taxon>Aconoidasida</taxon>
        <taxon>Haemosporida</taxon>
        <taxon>Plasmodiidae</taxon>
        <taxon>Plasmodium</taxon>
        <taxon>Plasmodium (Plasmodium)</taxon>
    </lineage>
</organism>
<evidence type="ECO:0000250" key="1">
    <source>
        <dbReference type="UniProtKB" id="P00727"/>
    </source>
</evidence>
<evidence type="ECO:0000250" key="2">
    <source>
        <dbReference type="UniProtKB" id="Q8IL11"/>
    </source>
</evidence>
<evidence type="ECO:0000256" key="3">
    <source>
        <dbReference type="SAM" id="MobiDB-lite"/>
    </source>
</evidence>
<evidence type="ECO:0000269" key="4">
    <source>
    </source>
</evidence>
<evidence type="ECO:0000269" key="5">
    <source>
    </source>
</evidence>
<evidence type="ECO:0000269" key="6">
    <source>
    </source>
</evidence>
<evidence type="ECO:0000303" key="7">
    <source>
    </source>
</evidence>
<evidence type="ECO:0000303" key="8">
    <source>
    </source>
</evidence>
<evidence type="ECO:0000305" key="9"/>
<evidence type="ECO:0000312" key="10">
    <source>
        <dbReference type="EMBL" id="EDL46203.1"/>
    </source>
</evidence>
<evidence type="ECO:0000312" key="11">
    <source>
        <dbReference type="PDB" id="7K5K"/>
    </source>
</evidence>
<evidence type="ECO:0000312" key="12">
    <source>
        <dbReference type="Proteomes" id="UP000008333"/>
    </source>
</evidence>
<evidence type="ECO:0007744" key="13">
    <source>
        <dbReference type="PDB" id="6WVV"/>
    </source>
</evidence>
<evidence type="ECO:0007744" key="14">
    <source>
        <dbReference type="PDB" id="7K5K"/>
    </source>
</evidence>
<evidence type="ECO:0007829" key="15">
    <source>
        <dbReference type="PDB" id="6WVV"/>
    </source>
</evidence>
<evidence type="ECO:0007829" key="16">
    <source>
        <dbReference type="PDB" id="7K5K"/>
    </source>
</evidence>
<sequence>MPLLRSSQHIKNTYWNIPKKSFRTGVPQFAESKKTRILHLHPLCKSASGVESPPFFDSQTFSSISNRKEFRKMATTVPQVVSLDPTTIPIDYHTPIDDLSIEVKDISAEACPADEGLIVFLLNSAPKHSSSGGSGGNGGSAGSSGNGEGGAQIKINSSVKDNTINEFLKEGNMENFTGKLGTSKSFYIANDQKKYVSLAYVGCGPANEETELEIRKVAYALVTLLHDSKHKKVSIIFEIKIEEALFRFFLEHLFYEYVTDERFKSADKSTETDFIKNLSLHIANADAYKGQIDKARVYFYGTYYAAQLIAAPSNYCNPVSLSNAAVELAQKVNLECKILDVKELEELKMGAYLSVGKGSMYPNKFIHLTYKGAQTGASQNEKKKIALIGKGITFDSGGYNLKAAPGSMIDLMKFDMSGCAAVLGCAYCIGTIKPDNVEVHFLSAVCENMVSKNSYRPGDIITASNGKTIEVGNTDAEGRLTLADALVYAEKLGVDYIVDIATLTGAMLYSLGTSYAGVFGNNDQLINKILSSSKTSNEPVWWLPIINEYRSSLNSKYADLNNISSSVKASSVVASLFLKEFIENTPWAHIDIAGVSWNFKARKPKGFGVRLLTEFVLNDAV</sequence>
<gene>
    <name evidence="7" type="primary">LAP</name>
    <name evidence="10" type="ORF">PVX_118180</name>
</gene>
<name>AMPL_PLAVS</name>
<comment type="function">
    <text evidence="4 5 6">Aminopeptidase which preferentially cleaves leucine residues from the N-terminus of peptides (PubMed:19931315, PubMed:34133730). Also, has some activity towards tryptophan and methionine and has very low activity towards alanine, arginine, asparagine, phenylalanine and tyrosine (PubMed:19931315, PubMed:34133730). No activity towards histidine, serine, valine, isoleucine, glycine, aspartic acid and glutamic acid (PubMed:34133730). In addition, cleaves the Cys-Gly dipeptide, probably as part of the glutathione regulation pathway; cleavage only occurs in the presence of Mn(2+) (PubMed:33303633). Plays a role in the final step of host hemoglobin catabolism, by cleaving hemoglobin-derived oligopeptides providing a source of amino acids for the parasite protein synthesis and for the maintenance of osmotic homeostasis (PubMed:34133730).</text>
</comment>
<comment type="catalytic activity">
    <reaction evidence="4 5 6">
        <text>Release of an N-terminal amino acid, Xaa-|-Yaa-, in which Xaa is preferably Leu, but may be other amino acids including Pro although not Arg or Lys, and Yaa may be Pro. Amino acid amides and methyl esters are also readily hydrolyzed, but rates on arylamides are exceedingly low.</text>
        <dbReference type="EC" id="3.4.11.1"/>
    </reaction>
</comment>
<comment type="catalytic activity">
    <reaction evidence="5">
        <text>L-cysteinylglycine + H2O = L-cysteine + glycine</text>
        <dbReference type="Rhea" id="RHEA:28783"/>
        <dbReference type="ChEBI" id="CHEBI:15377"/>
        <dbReference type="ChEBI" id="CHEBI:35235"/>
        <dbReference type="ChEBI" id="CHEBI:57305"/>
        <dbReference type="ChEBI" id="CHEBI:61694"/>
    </reaction>
</comment>
<comment type="cofactor">
    <cofactor evidence="4 5">
        <name>Zn(2+)</name>
        <dbReference type="ChEBI" id="CHEBI:29105"/>
    </cofactor>
    <text evidence="2 5">Binds 2 Zn(2+) ions per subunit (PubMed:33303633). Two metal binding sites with different affinities are located in the enzyme active site and can be occupied in vitro by different metals (PubMed:33303633). Site 1 binds metal with low affinity and can be occupied by Zn(2+), Mn(2+), Co(2+) or Mg(2+) (By similarity). While Zn(2+) has the highest affinity for site 1, catalytic activity is the highest with Mn(2+) or Co(2+) and less with Mg(2+) (PubMed:33303633). Site 2 binds tightly to the metal ion and can be occupied only by Zn(2+) or Co(2+) (By similarity). A third metal binding site is also present in an inactive conformation of the hexamer; in this conformation only the metal binding sites 1 and 3 are occupied (By similarity).</text>
</comment>
<comment type="activity regulation">
    <text evidence="2 4 5 6">Oligomerization is required for catalytic activity and is metal-dependent (PubMed:33303633). The type of metal that binds the 2 metal binding sites influences catalytic activity and substrate specificity (PubMed:19931315). In vitro, activated by Co(2+), Mn(2+), Ni(2+), Mg(2+) and Zn(2+) with decreasing strength (PubMed:19931315). Occupancy of the site 2 is essential and sufficient for activating the enzyme but occupation of the 2 sites is necessary for full catalytic activity (By similarity). Inhibited by Ca(2+) (PubMed:19931315). Inhibited by fungal metabolite bestatin (PubMed:19931315, PubMed:34133730).</text>
</comment>
<comment type="biophysicochemical properties">
    <kinetics>
        <KM evidence="4">4.95 uM for H-Leu-NHMec</KM>
        <KM evidence="6">31 uM for H-Leu-NHMec (at pH 8, at 37 degrees Celsius and in the presence of Co(2+))</KM>
        <KM evidence="5">20.1 uM for H-Leu-NHMec (at pH 8, at 37 degrees Celsius and in the presence of Co(2+))</KM>
        <KM evidence="5">34.2 uM for H-Leu-NHMec (at pH 8, at 37 degrees Celsius and in the presence of Mn(2+))</KM>
        <Vmax evidence="4">476.2 umol/min/ug enzyme towards H-Leu-NHMec</Vmax>
        <text evidence="5 6">kcat is 0.04 sec(-1) with for H-Leu-NHMec as substrate (at pH 8, at 37 degrees Celsius and in the presence of Co(2+)) (PubMed:34133730). kcat is 0.98 sec(-1) with for H-Leu-NHMec as substrate (at pH 8, at 37 degrees Celsius and in the presence of Co(2+)) (PubMed:33303633). kcat is 13.8 sec(-1) with for H-Leu-NHMec as substrate (at pH 8, at 37 degrees Celsius and in the presence of Mn(2+)) (PubMed:33303633).</text>
    </kinetics>
    <phDependence>
        <text evidence="4 5">Optimum pH is 8.5 (PubMed:19931315). Optimum pH is 7-8 for the cleavage of the Cys-Gly dipeptide (PubMed:33303633).</text>
    </phDependence>
</comment>
<comment type="subunit">
    <text evidence="5">Homohexamer composed of dimer of trimers (PubMed:33303633). Both the identity and concentration of metal ions available dictate the extent to which oligomerization occurs; Mn(2+) and Co(2+) induces oligomerization, whereas Mg(2+) has no effect, and Zn(2+) causes irreversible protein aggregation in vitro (PubMed:33303633).</text>
</comment>
<comment type="subcellular location">
    <subcellularLocation>
        <location evidence="4">Cytoplasm</location>
    </subcellularLocation>
</comment>
<comment type="developmental stage">
    <text evidence="4">Expressed during the asexual blood stage (at protein level).</text>
</comment>
<comment type="domain">
    <text evidence="2">The L13 loop movement regulates the transition between active and inactive conformations by repositioning Lys-402, which, in turn, mediates the rearrangement of the binuclear metal center.</text>
</comment>
<comment type="similarity">
    <text evidence="9">Belongs to the peptidase M17 family.</text>
</comment>
<proteinExistence type="evidence at protein level"/>
<feature type="propeptide" id="PRO_0000457795" evidence="4">
    <location>
        <begin position="1"/>
        <end position="73"/>
    </location>
</feature>
<feature type="chain" id="PRO_0000457796" description="Leucine aminopeptidase">
    <location>
        <begin position="74"/>
        <end position="621"/>
    </location>
</feature>
<feature type="region of interest" description="Disordered" evidence="3">
    <location>
        <begin position="129"/>
        <end position="152"/>
    </location>
</feature>
<feature type="region of interest" description="L13 loop" evidence="2">
    <location>
        <begin position="400"/>
        <end position="417"/>
    </location>
</feature>
<feature type="compositionally biased region" description="Gly residues" evidence="3">
    <location>
        <begin position="132"/>
        <end position="150"/>
    </location>
</feature>
<feature type="active site" evidence="1">
    <location>
        <position position="402"/>
    </location>
</feature>
<feature type="active site" evidence="1">
    <location>
        <position position="479"/>
    </location>
</feature>
<feature type="binding site" evidence="2">
    <location>
        <position position="390"/>
    </location>
    <ligand>
        <name>a peptide</name>
        <dbReference type="ChEBI" id="CHEBI:60466"/>
        <note>substrate</note>
    </ligand>
</feature>
<feature type="binding site" evidence="5 11 13">
    <location>
        <position position="390"/>
    </location>
    <ligand>
        <name>Zn(2+)</name>
        <dbReference type="ChEBI" id="CHEBI:29105"/>
        <label>2</label>
        <note>catalytic</note>
    </ligand>
</feature>
<feature type="binding site" evidence="2">
    <location>
        <position position="395"/>
    </location>
    <ligand>
        <name>a peptide</name>
        <dbReference type="ChEBI" id="CHEBI:60466"/>
        <note>substrate</note>
    </ligand>
</feature>
<feature type="binding site" evidence="5 11 13">
    <location>
        <position position="395"/>
    </location>
    <ligand>
        <name>Zn(2+)</name>
        <dbReference type="ChEBI" id="CHEBI:29105"/>
        <label>1</label>
        <note>structural</note>
    </ligand>
</feature>
<feature type="binding site" evidence="5 11 13">
    <location>
        <position position="395"/>
    </location>
    <ligand>
        <name>Zn(2+)</name>
        <dbReference type="ChEBI" id="CHEBI:29105"/>
        <label>2</label>
        <note>catalytic</note>
    </ligand>
</feature>
<feature type="binding site" evidence="2">
    <location>
        <position position="402"/>
    </location>
    <ligand>
        <name>a peptide</name>
        <dbReference type="ChEBI" id="CHEBI:60466"/>
        <note>substrate</note>
    </ligand>
</feature>
<feature type="binding site" evidence="2">
    <location>
        <position position="410"/>
    </location>
    <ligand>
        <name>Zn(2+)</name>
        <dbReference type="ChEBI" id="CHEBI:29105"/>
        <label>3</label>
        <note>structural</note>
    </ligand>
</feature>
<feature type="binding site" evidence="2">
    <location>
        <position position="412"/>
    </location>
    <ligand>
        <name>Zn(2+)</name>
        <dbReference type="ChEBI" id="CHEBI:29105"/>
        <label>3</label>
        <note>structural</note>
    </ligand>
</feature>
<feature type="binding site" evidence="2">
    <location>
        <position position="415"/>
    </location>
    <ligand>
        <name>a peptide</name>
        <dbReference type="ChEBI" id="CHEBI:60466"/>
        <note>substrate</note>
    </ligand>
</feature>
<feature type="binding site" evidence="5 11 13">
    <location>
        <position position="415"/>
    </location>
    <ligand>
        <name>Zn(2+)</name>
        <dbReference type="ChEBI" id="CHEBI:29105"/>
        <label>2</label>
        <note>catalytic</note>
    </ligand>
</feature>
<feature type="binding site" evidence="2">
    <location>
        <position position="415"/>
    </location>
    <ligand>
        <name>Zn(2+)</name>
        <dbReference type="ChEBI" id="CHEBI:29105"/>
        <label>3</label>
        <note>structural</note>
    </ligand>
</feature>
<feature type="binding site" evidence="2">
    <location>
        <position position="475"/>
    </location>
    <ligand>
        <name>a peptide</name>
        <dbReference type="ChEBI" id="CHEBI:60466"/>
        <note>substrate</note>
    </ligand>
</feature>
<feature type="binding site" evidence="5 11 13">
    <location>
        <position position="475"/>
    </location>
    <ligand>
        <name>Zn(2+)</name>
        <dbReference type="ChEBI" id="CHEBI:29105"/>
        <label>1</label>
        <note>structural</note>
    </ligand>
</feature>
<feature type="binding site" evidence="5 11 13">
    <location>
        <position position="477"/>
    </location>
    <ligand>
        <name>Zn(2+)</name>
        <dbReference type="ChEBI" id="CHEBI:29105"/>
        <label>1</label>
        <note>structural</note>
    </ligand>
</feature>
<feature type="binding site" evidence="5 11 13">
    <location>
        <position position="477"/>
    </location>
    <ligand>
        <name>Zn(2+)</name>
        <dbReference type="ChEBI" id="CHEBI:29105"/>
        <label>2</label>
        <note>catalytic</note>
    </ligand>
</feature>
<feature type="site" description="Essential for hexamer stabilization" evidence="2">
    <location>
        <position position="386"/>
    </location>
</feature>
<feature type="mutagenesis site" description="1.8-fold reduction in catalytic efficiency and 3-fold decrease in substrate affinity in the presence of Co(2+). 2.9-fold increase in catalytic efficiency and 1.5-fold decrease in substrate affinity in the presence of Mn(2+)." evidence="5">
    <location>
        <begin position="125"/>
        <end position="151"/>
    </location>
</feature>
<feature type="mutagenesis site" description="11-fold reduction in catalytic efficiency in the presence of Co(2+); 2229-fold reduction in catalytic efficiency in the presence of Mn(2+); impairs formation of stable homohexamer; when associated with L-477." evidence="5">
    <original>D</original>
    <variation>A</variation>
    <location>
        <position position="395"/>
    </location>
</feature>
<feature type="mutagenesis site" description="11-fold reduction in catalytic efficiency in the presence of Co(2+); 2229-fold reduction in catalytic efficiency in the presence of Mn(2+); impairs formation of stable homohexamer; when associated with A-395." evidence="5">
    <original>E</original>
    <variation>L</variation>
    <location>
        <position position="477"/>
    </location>
</feature>
<feature type="helix" evidence="15">
    <location>
        <begin position="95"/>
        <end position="98"/>
    </location>
</feature>
<feature type="strand" evidence="15">
    <location>
        <begin position="100"/>
        <end position="105"/>
    </location>
</feature>
<feature type="turn" evidence="15">
    <location>
        <begin position="106"/>
        <end position="109"/>
    </location>
</feature>
<feature type="strand" evidence="15">
    <location>
        <begin position="115"/>
        <end position="122"/>
    </location>
</feature>
<feature type="strand" evidence="16">
    <location>
        <begin position="131"/>
        <end position="133"/>
    </location>
</feature>
<feature type="turn" evidence="16">
    <location>
        <begin position="145"/>
        <end position="150"/>
    </location>
</feature>
<feature type="helix" evidence="15">
    <location>
        <begin position="162"/>
        <end position="169"/>
    </location>
</feature>
<feature type="strand" evidence="16">
    <location>
        <begin position="179"/>
        <end position="181"/>
    </location>
</feature>
<feature type="strand" evidence="15">
    <location>
        <begin position="183"/>
        <end position="189"/>
    </location>
</feature>
<feature type="strand" evidence="16">
    <location>
        <begin position="191"/>
        <end position="193"/>
    </location>
</feature>
<feature type="strand" evidence="15">
    <location>
        <begin position="195"/>
        <end position="202"/>
    </location>
</feature>
<feature type="helix" evidence="15">
    <location>
        <begin position="211"/>
        <end position="226"/>
    </location>
</feature>
<feature type="strand" evidence="15">
    <location>
        <begin position="231"/>
        <end position="237"/>
    </location>
</feature>
<feature type="helix" evidence="15">
    <location>
        <begin position="243"/>
        <end position="257"/>
    </location>
</feature>
<feature type="strand" evidence="16">
    <location>
        <begin position="265"/>
        <end position="267"/>
    </location>
</feature>
<feature type="strand" evidence="15">
    <location>
        <begin position="277"/>
        <end position="282"/>
    </location>
</feature>
<feature type="helix" evidence="15">
    <location>
        <begin position="285"/>
        <end position="287"/>
    </location>
</feature>
<feature type="turn" evidence="15">
    <location>
        <begin position="288"/>
        <end position="290"/>
    </location>
</feature>
<feature type="helix" evidence="15">
    <location>
        <begin position="291"/>
        <end position="310"/>
    </location>
</feature>
<feature type="turn" evidence="15">
    <location>
        <begin position="313"/>
        <end position="315"/>
    </location>
</feature>
<feature type="helix" evidence="15">
    <location>
        <begin position="318"/>
        <end position="331"/>
    </location>
</feature>
<feature type="strand" evidence="15">
    <location>
        <begin position="335"/>
        <end position="339"/>
    </location>
</feature>
<feature type="helix" evidence="15">
    <location>
        <begin position="341"/>
        <end position="346"/>
    </location>
</feature>
<feature type="helix" evidence="15">
    <location>
        <begin position="350"/>
        <end position="355"/>
    </location>
</feature>
<feature type="helix" evidence="15">
    <location>
        <begin position="356"/>
        <end position="358"/>
    </location>
</feature>
<feature type="strand" evidence="16">
    <location>
        <begin position="359"/>
        <end position="361"/>
    </location>
</feature>
<feature type="strand" evidence="15">
    <location>
        <begin position="364"/>
        <end position="371"/>
    </location>
</feature>
<feature type="strand" evidence="16">
    <location>
        <begin position="377"/>
        <end position="380"/>
    </location>
</feature>
<feature type="strand" evidence="15">
    <location>
        <begin position="383"/>
        <end position="389"/>
    </location>
</feature>
<feature type="strand" evidence="15">
    <location>
        <begin position="391"/>
        <end position="395"/>
    </location>
</feature>
<feature type="helix" evidence="15">
    <location>
        <begin position="409"/>
        <end position="416"/>
    </location>
</feature>
<feature type="helix" evidence="15">
    <location>
        <begin position="417"/>
        <end position="432"/>
    </location>
</feature>
<feature type="strand" evidence="15">
    <location>
        <begin position="435"/>
        <end position="448"/>
    </location>
</feature>
<feature type="strand" evidence="16">
    <location>
        <begin position="451"/>
        <end position="453"/>
    </location>
</feature>
<feature type="strand" evidence="15">
    <location>
        <begin position="460"/>
        <end position="462"/>
    </location>
</feature>
<feature type="strand" evidence="15">
    <location>
        <begin position="468"/>
        <end position="470"/>
    </location>
</feature>
<feature type="helix" evidence="15">
    <location>
        <begin position="478"/>
        <end position="491"/>
    </location>
</feature>
<feature type="strand" evidence="15">
    <location>
        <begin position="495"/>
        <end position="501"/>
    </location>
</feature>
<feature type="helix" evidence="15">
    <location>
        <begin position="507"/>
        <end position="510"/>
    </location>
</feature>
<feature type="turn" evidence="15">
    <location>
        <begin position="511"/>
        <end position="514"/>
    </location>
</feature>
<feature type="strand" evidence="15">
    <location>
        <begin position="516"/>
        <end position="521"/>
    </location>
</feature>
<feature type="helix" evidence="15">
    <location>
        <begin position="523"/>
        <end position="536"/>
    </location>
</feature>
<feature type="strand" evidence="15">
    <location>
        <begin position="540"/>
        <end position="542"/>
    </location>
</feature>
<feature type="helix" evidence="15">
    <location>
        <begin position="547"/>
        <end position="553"/>
    </location>
</feature>
<feature type="strand" evidence="15">
    <location>
        <begin position="556"/>
        <end position="563"/>
    </location>
</feature>
<feature type="helix" evidence="15">
    <location>
        <begin position="570"/>
        <end position="579"/>
    </location>
</feature>
<feature type="strand" evidence="15">
    <location>
        <begin position="583"/>
        <end position="585"/>
    </location>
</feature>
<feature type="strand" evidence="15">
    <location>
        <begin position="587"/>
        <end position="591"/>
    </location>
</feature>
<feature type="turn" evidence="15">
    <location>
        <begin position="593"/>
        <end position="595"/>
    </location>
</feature>
<feature type="strand" evidence="15">
    <location>
        <begin position="596"/>
        <end position="598"/>
    </location>
</feature>
<feature type="turn" evidence="15">
    <location>
        <begin position="599"/>
        <end position="602"/>
    </location>
</feature>
<feature type="helix" evidence="15">
    <location>
        <begin position="609"/>
        <end position="617"/>
    </location>
</feature>
<protein>
    <recommendedName>
        <fullName evidence="7">Leucine aminopeptidase</fullName>
        <shortName evidence="7">PvLAP</shortName>
        <ecNumber evidence="4 5 6">3.4.11.1</ecNumber>
        <ecNumber evidence="5">3.4.13.-</ecNumber>
    </recommendedName>
    <alternativeName>
        <fullName evidence="8">M17 leucyl aminopeptidase</fullName>
        <shortName evidence="8">Pv-M17</shortName>
    </alternativeName>
</protein>
<keyword id="KW-0002">3D-structure</keyword>
<keyword id="KW-0031">Aminopeptidase</keyword>
<keyword id="KW-0963">Cytoplasm</keyword>
<keyword id="KW-0224">Dipeptidase</keyword>
<keyword id="KW-0378">Hydrolase</keyword>
<keyword id="KW-0479">Metal-binding</keyword>
<keyword id="KW-0645">Protease</keyword>
<keyword id="KW-1185">Reference proteome</keyword>
<keyword id="KW-0862">Zinc</keyword>